<dbReference type="EMBL" id="AE004091">
    <property type="protein sequence ID" value="AAG07649.1"/>
    <property type="molecule type" value="Genomic_DNA"/>
</dbReference>
<dbReference type="PIR" id="C83116">
    <property type="entry name" value="C83116"/>
</dbReference>
<dbReference type="RefSeq" id="NP_252951.1">
    <property type="nucleotide sequence ID" value="NC_002516.2"/>
</dbReference>
<dbReference type="RefSeq" id="WP_003093736.1">
    <property type="nucleotide sequence ID" value="NZ_QZGE01000028.1"/>
</dbReference>
<dbReference type="PDB" id="7UNR">
    <property type="method" value="EM"/>
    <property type="resolution" value="2.90 A"/>
    <property type="chains" value="V=1-99"/>
</dbReference>
<dbReference type="PDB" id="7UNU">
    <property type="method" value="EM"/>
    <property type="resolution" value="2.90 A"/>
    <property type="chains" value="V=1-99"/>
</dbReference>
<dbReference type="PDB" id="7UNV">
    <property type="method" value="EM"/>
    <property type="resolution" value="2.70 A"/>
    <property type="chains" value="V=1-99"/>
</dbReference>
<dbReference type="PDB" id="7UNW">
    <property type="method" value="EM"/>
    <property type="resolution" value="2.60 A"/>
    <property type="chains" value="V=1-99"/>
</dbReference>
<dbReference type="PDB" id="8CD1">
    <property type="method" value="EM"/>
    <property type="resolution" value="3.00 A"/>
    <property type="chains" value="T=1-99"/>
</dbReference>
<dbReference type="PDB" id="8RWG">
    <property type="method" value="EM"/>
    <property type="resolution" value="2.46 A"/>
    <property type="chains" value="T=1-99"/>
</dbReference>
<dbReference type="PDBsum" id="7UNR"/>
<dbReference type="PDBsum" id="7UNU"/>
<dbReference type="PDBsum" id="7UNV"/>
<dbReference type="PDBsum" id="7UNW"/>
<dbReference type="PDBsum" id="8CD1"/>
<dbReference type="PDBsum" id="8RWG"/>
<dbReference type="EMDB" id="EMD-16566"/>
<dbReference type="EMDB" id="EMD-19547"/>
<dbReference type="EMDB" id="EMD-26630"/>
<dbReference type="EMDB" id="EMD-26633"/>
<dbReference type="EMDB" id="EMD-26634"/>
<dbReference type="EMDB" id="EMD-26635"/>
<dbReference type="SMR" id="Q9HWD7"/>
<dbReference type="FunCoup" id="Q9HWD7">
    <property type="interactions" value="669"/>
</dbReference>
<dbReference type="STRING" id="208964.PA4261"/>
<dbReference type="PaxDb" id="208964-PA4261"/>
<dbReference type="GeneID" id="77219200"/>
<dbReference type="GeneID" id="881753"/>
<dbReference type="KEGG" id="pae:PA4261"/>
<dbReference type="PATRIC" id="fig|208964.12.peg.4462"/>
<dbReference type="PseudoCAP" id="PA4261"/>
<dbReference type="HOGENOM" id="CLU_037562_3_1_6"/>
<dbReference type="InParanoid" id="Q9HWD7"/>
<dbReference type="OrthoDB" id="9793353at2"/>
<dbReference type="PhylomeDB" id="Q9HWD7"/>
<dbReference type="BioCyc" id="PAER208964:G1FZ6-4334-MONOMER"/>
<dbReference type="PRO" id="PR:Q9HWD7"/>
<dbReference type="Proteomes" id="UP000002438">
    <property type="component" value="Chromosome"/>
</dbReference>
<dbReference type="GO" id="GO:0022625">
    <property type="term" value="C:cytosolic large ribosomal subunit"/>
    <property type="evidence" value="ECO:0000318"/>
    <property type="project" value="GO_Central"/>
</dbReference>
<dbReference type="GO" id="GO:0019843">
    <property type="term" value="F:rRNA binding"/>
    <property type="evidence" value="ECO:0007669"/>
    <property type="project" value="UniProtKB-UniRule"/>
</dbReference>
<dbReference type="GO" id="GO:0003735">
    <property type="term" value="F:structural constituent of ribosome"/>
    <property type="evidence" value="ECO:0000318"/>
    <property type="project" value="GO_Central"/>
</dbReference>
<dbReference type="GO" id="GO:0006412">
    <property type="term" value="P:translation"/>
    <property type="evidence" value="ECO:0007669"/>
    <property type="project" value="UniProtKB-UniRule"/>
</dbReference>
<dbReference type="FunFam" id="3.30.70.330:FF:000001">
    <property type="entry name" value="50S ribosomal protein L23"/>
    <property type="match status" value="1"/>
</dbReference>
<dbReference type="Gene3D" id="3.30.70.330">
    <property type="match status" value="1"/>
</dbReference>
<dbReference type="HAMAP" id="MF_01369_B">
    <property type="entry name" value="Ribosomal_uL23_B"/>
    <property type="match status" value="1"/>
</dbReference>
<dbReference type="InterPro" id="IPR012677">
    <property type="entry name" value="Nucleotide-bd_a/b_plait_sf"/>
</dbReference>
<dbReference type="InterPro" id="IPR013025">
    <property type="entry name" value="Ribosomal_uL23-like"/>
</dbReference>
<dbReference type="InterPro" id="IPR012678">
    <property type="entry name" value="Ribosomal_uL23/eL15/eS24_sf"/>
</dbReference>
<dbReference type="NCBIfam" id="NF004359">
    <property type="entry name" value="PRK05738.1-3"/>
    <property type="match status" value="1"/>
</dbReference>
<dbReference type="NCBIfam" id="NF004363">
    <property type="entry name" value="PRK05738.2-4"/>
    <property type="match status" value="1"/>
</dbReference>
<dbReference type="PANTHER" id="PTHR11620">
    <property type="entry name" value="60S RIBOSOMAL PROTEIN L23A"/>
    <property type="match status" value="1"/>
</dbReference>
<dbReference type="Pfam" id="PF00276">
    <property type="entry name" value="Ribosomal_L23"/>
    <property type="match status" value="1"/>
</dbReference>
<dbReference type="SUPFAM" id="SSF54189">
    <property type="entry name" value="Ribosomal proteins S24e, L23 and L15e"/>
    <property type="match status" value="1"/>
</dbReference>
<protein>
    <recommendedName>
        <fullName evidence="1">Large ribosomal subunit protein uL23</fullName>
    </recommendedName>
    <alternativeName>
        <fullName evidence="2">50S ribosomal protein L23</fullName>
    </alternativeName>
</protein>
<name>RL23_PSEAE</name>
<proteinExistence type="evidence at protein level"/>
<reference key="1">
    <citation type="journal article" date="2000" name="Nature">
        <title>Complete genome sequence of Pseudomonas aeruginosa PAO1, an opportunistic pathogen.</title>
        <authorList>
            <person name="Stover C.K."/>
            <person name="Pham X.-Q.T."/>
            <person name="Erwin A.L."/>
            <person name="Mizoguchi S.D."/>
            <person name="Warrener P."/>
            <person name="Hickey M.J."/>
            <person name="Brinkman F.S.L."/>
            <person name="Hufnagle W.O."/>
            <person name="Kowalik D.J."/>
            <person name="Lagrou M."/>
            <person name="Garber R.L."/>
            <person name="Goltry L."/>
            <person name="Tolentino E."/>
            <person name="Westbrock-Wadman S."/>
            <person name="Yuan Y."/>
            <person name="Brody L.L."/>
            <person name="Coulter S.N."/>
            <person name="Folger K.R."/>
            <person name="Kas A."/>
            <person name="Larbig K."/>
            <person name="Lim R.M."/>
            <person name="Smith K.A."/>
            <person name="Spencer D.H."/>
            <person name="Wong G.K.-S."/>
            <person name="Wu Z."/>
            <person name="Paulsen I.T."/>
            <person name="Reizer J."/>
            <person name="Saier M.H. Jr."/>
            <person name="Hancock R.E.W."/>
            <person name="Lory S."/>
            <person name="Olson M.V."/>
        </authorList>
    </citation>
    <scope>NUCLEOTIDE SEQUENCE [LARGE SCALE GENOMIC DNA]</scope>
    <source>
        <strain>ATCC 15692 / DSM 22644 / CIP 104116 / JCM 14847 / LMG 12228 / 1C / PRS 101 / PAO1</strain>
    </source>
</reference>
<sequence>MNQERVFKVLLGPHISEKATGLADGKSQFVFKVATDATKLEIKKAVESLFSVKVQRVTTLNVKGKTKRTARGLGKRNDWKKAYIALQPGQDLDFATSAE</sequence>
<organism>
    <name type="scientific">Pseudomonas aeruginosa (strain ATCC 15692 / DSM 22644 / CIP 104116 / JCM 14847 / LMG 12228 / 1C / PRS 101 / PAO1)</name>
    <dbReference type="NCBI Taxonomy" id="208964"/>
    <lineage>
        <taxon>Bacteria</taxon>
        <taxon>Pseudomonadati</taxon>
        <taxon>Pseudomonadota</taxon>
        <taxon>Gammaproteobacteria</taxon>
        <taxon>Pseudomonadales</taxon>
        <taxon>Pseudomonadaceae</taxon>
        <taxon>Pseudomonas</taxon>
    </lineage>
</organism>
<keyword id="KW-0002">3D-structure</keyword>
<keyword id="KW-1185">Reference proteome</keyword>
<keyword id="KW-0687">Ribonucleoprotein</keyword>
<keyword id="KW-0689">Ribosomal protein</keyword>
<keyword id="KW-0694">RNA-binding</keyword>
<keyword id="KW-0699">rRNA-binding</keyword>
<accession>Q9HWD7</accession>
<feature type="chain" id="PRO_0000272804" description="Large ribosomal subunit protein uL23">
    <location>
        <begin position="1"/>
        <end position="99"/>
    </location>
</feature>
<gene>
    <name evidence="1" type="primary">rplW</name>
    <name type="ordered locus">PA4261</name>
</gene>
<evidence type="ECO:0000255" key="1">
    <source>
        <dbReference type="HAMAP-Rule" id="MF_01369"/>
    </source>
</evidence>
<evidence type="ECO:0000305" key="2"/>
<comment type="function">
    <text evidence="1">One of the early assembly proteins it binds 23S rRNA. One of the proteins that surrounds the polypeptide exit tunnel on the outside of the ribosome. Forms the main docking site for trigger factor binding to the ribosome.</text>
</comment>
<comment type="subunit">
    <text evidence="1">Part of the 50S ribosomal subunit. Contacts protein L29, and trigger factor when it is bound to the ribosome.</text>
</comment>
<comment type="similarity">
    <text evidence="1">Belongs to the universal ribosomal protein uL23 family.</text>
</comment>